<evidence type="ECO:0000255" key="1">
    <source>
        <dbReference type="HAMAP-Rule" id="MF_01106"/>
    </source>
</evidence>
<evidence type="ECO:0000305" key="2"/>
<dbReference type="EC" id="2.3.1.35" evidence="1"/>
<dbReference type="EC" id="2.3.1.1" evidence="1"/>
<dbReference type="EMBL" id="AL939109">
    <property type="protein sequence ID" value="CAD55284.1"/>
    <property type="molecule type" value="Genomic_DNA"/>
</dbReference>
<dbReference type="RefSeq" id="NP_733539.1">
    <property type="nucleotide sequence ID" value="NC_003888.3"/>
</dbReference>
<dbReference type="RefSeq" id="WP_011027859.1">
    <property type="nucleotide sequence ID" value="NZ_VNID01000021.1"/>
</dbReference>
<dbReference type="SMR" id="Q8CK24"/>
<dbReference type="FunCoup" id="Q8CK24">
    <property type="interactions" value="375"/>
</dbReference>
<dbReference type="STRING" id="100226.gene:17759172"/>
<dbReference type="PaxDb" id="100226-SCO1579"/>
<dbReference type="KEGG" id="sco:SCO1579"/>
<dbReference type="PATRIC" id="fig|100226.15.peg.1591"/>
<dbReference type="eggNOG" id="COG1364">
    <property type="taxonomic scope" value="Bacteria"/>
</dbReference>
<dbReference type="HOGENOM" id="CLU_027172_2_0_11"/>
<dbReference type="InParanoid" id="Q8CK24"/>
<dbReference type="OrthoDB" id="9804242at2"/>
<dbReference type="PhylomeDB" id="Q8CK24"/>
<dbReference type="UniPathway" id="UPA00068">
    <property type="reaction ID" value="UER00106"/>
</dbReference>
<dbReference type="UniPathway" id="UPA00068">
    <property type="reaction ID" value="UER00111"/>
</dbReference>
<dbReference type="Proteomes" id="UP000001973">
    <property type="component" value="Chromosome"/>
</dbReference>
<dbReference type="GO" id="GO:0005737">
    <property type="term" value="C:cytoplasm"/>
    <property type="evidence" value="ECO:0007669"/>
    <property type="project" value="UniProtKB-SubCell"/>
</dbReference>
<dbReference type="GO" id="GO:0004358">
    <property type="term" value="F:glutamate N-acetyltransferase activity"/>
    <property type="evidence" value="ECO:0007669"/>
    <property type="project" value="UniProtKB-UniRule"/>
</dbReference>
<dbReference type="GO" id="GO:0004042">
    <property type="term" value="F:L-glutamate N-acetyltransferase activity"/>
    <property type="evidence" value="ECO:0000318"/>
    <property type="project" value="GO_Central"/>
</dbReference>
<dbReference type="GO" id="GO:0006526">
    <property type="term" value="P:L-arginine biosynthetic process"/>
    <property type="evidence" value="ECO:0007669"/>
    <property type="project" value="UniProtKB-UniRule"/>
</dbReference>
<dbReference type="GO" id="GO:0006592">
    <property type="term" value="P:ornithine biosynthetic process"/>
    <property type="evidence" value="ECO:0000318"/>
    <property type="project" value="GO_Central"/>
</dbReference>
<dbReference type="CDD" id="cd02152">
    <property type="entry name" value="OAT"/>
    <property type="match status" value="1"/>
</dbReference>
<dbReference type="FunFam" id="3.10.20.340:FF:000003">
    <property type="entry name" value="Arginine biosynthesis bifunctional protein ArgJ"/>
    <property type="match status" value="1"/>
</dbReference>
<dbReference type="FunFam" id="3.60.70.12:FF:000007">
    <property type="entry name" value="Arginine biosynthesis bifunctional protein ArgJ"/>
    <property type="match status" value="1"/>
</dbReference>
<dbReference type="Gene3D" id="3.10.20.340">
    <property type="entry name" value="ArgJ beta chain, C-terminal domain"/>
    <property type="match status" value="1"/>
</dbReference>
<dbReference type="Gene3D" id="3.60.70.12">
    <property type="entry name" value="L-amino peptidase D-ALA esterase/amidase"/>
    <property type="match status" value="1"/>
</dbReference>
<dbReference type="HAMAP" id="MF_01106">
    <property type="entry name" value="ArgJ"/>
    <property type="match status" value="1"/>
</dbReference>
<dbReference type="InterPro" id="IPR002813">
    <property type="entry name" value="Arg_biosynth_ArgJ"/>
</dbReference>
<dbReference type="InterPro" id="IPR016117">
    <property type="entry name" value="ArgJ-like_dom_sf"/>
</dbReference>
<dbReference type="InterPro" id="IPR042195">
    <property type="entry name" value="ArgJ_beta_C"/>
</dbReference>
<dbReference type="NCBIfam" id="TIGR00120">
    <property type="entry name" value="ArgJ"/>
    <property type="match status" value="1"/>
</dbReference>
<dbReference type="NCBIfam" id="NF003802">
    <property type="entry name" value="PRK05388.1"/>
    <property type="match status" value="1"/>
</dbReference>
<dbReference type="PANTHER" id="PTHR23100">
    <property type="entry name" value="ARGININE BIOSYNTHESIS BIFUNCTIONAL PROTEIN ARGJ"/>
    <property type="match status" value="1"/>
</dbReference>
<dbReference type="PANTHER" id="PTHR23100:SF0">
    <property type="entry name" value="ARGININE BIOSYNTHESIS BIFUNCTIONAL PROTEIN ARGJ, MITOCHONDRIAL"/>
    <property type="match status" value="1"/>
</dbReference>
<dbReference type="Pfam" id="PF01960">
    <property type="entry name" value="ArgJ"/>
    <property type="match status" value="1"/>
</dbReference>
<dbReference type="SUPFAM" id="SSF56266">
    <property type="entry name" value="DmpA/ArgJ-like"/>
    <property type="match status" value="1"/>
</dbReference>
<comment type="function">
    <text evidence="1">Catalyzes two activities which are involved in the cyclic version of arginine biosynthesis: the synthesis of N-acetylglutamate from glutamate and acetyl-CoA as the acetyl donor, and of ornithine by transacetylation between N(2)-acetylornithine and glutamate.</text>
</comment>
<comment type="catalytic activity">
    <reaction evidence="1">
        <text>N(2)-acetyl-L-ornithine + L-glutamate = N-acetyl-L-glutamate + L-ornithine</text>
        <dbReference type="Rhea" id="RHEA:15349"/>
        <dbReference type="ChEBI" id="CHEBI:29985"/>
        <dbReference type="ChEBI" id="CHEBI:44337"/>
        <dbReference type="ChEBI" id="CHEBI:46911"/>
        <dbReference type="ChEBI" id="CHEBI:57805"/>
        <dbReference type="EC" id="2.3.1.35"/>
    </reaction>
</comment>
<comment type="catalytic activity">
    <reaction evidence="1">
        <text>L-glutamate + acetyl-CoA = N-acetyl-L-glutamate + CoA + H(+)</text>
        <dbReference type="Rhea" id="RHEA:24292"/>
        <dbReference type="ChEBI" id="CHEBI:15378"/>
        <dbReference type="ChEBI" id="CHEBI:29985"/>
        <dbReference type="ChEBI" id="CHEBI:44337"/>
        <dbReference type="ChEBI" id="CHEBI:57287"/>
        <dbReference type="ChEBI" id="CHEBI:57288"/>
        <dbReference type="EC" id="2.3.1.1"/>
    </reaction>
</comment>
<comment type="pathway">
    <text evidence="1">Amino-acid biosynthesis; L-arginine biosynthesis; L-ornithine and N-acetyl-L-glutamate from L-glutamate and N(2)-acetyl-L-ornithine (cyclic): step 1/1.</text>
</comment>
<comment type="pathway">
    <text evidence="1">Amino-acid biosynthesis; L-arginine biosynthesis; N(2)-acetyl-L-ornithine from L-glutamate: step 1/4.</text>
</comment>
<comment type="subunit">
    <text evidence="1">Heterotetramer of two alpha and two beta chains.</text>
</comment>
<comment type="subcellular location">
    <subcellularLocation>
        <location evidence="1 2">Cytoplasm</location>
    </subcellularLocation>
</comment>
<comment type="similarity">
    <text evidence="1">Belongs to the ArgJ family.</text>
</comment>
<organism>
    <name type="scientific">Streptomyces coelicolor (strain ATCC BAA-471 / A3(2) / M145)</name>
    <dbReference type="NCBI Taxonomy" id="100226"/>
    <lineage>
        <taxon>Bacteria</taxon>
        <taxon>Bacillati</taxon>
        <taxon>Actinomycetota</taxon>
        <taxon>Actinomycetes</taxon>
        <taxon>Kitasatosporales</taxon>
        <taxon>Streptomycetaceae</taxon>
        <taxon>Streptomyces</taxon>
        <taxon>Streptomyces albidoflavus group</taxon>
    </lineage>
</organism>
<protein>
    <recommendedName>
        <fullName evidence="1">Arginine biosynthesis bifunctional protein ArgJ</fullName>
    </recommendedName>
    <domain>
        <recommendedName>
            <fullName evidence="1">Glutamate N-acetyltransferase</fullName>
            <ecNumber evidence="1">2.3.1.35</ecNumber>
        </recommendedName>
        <alternativeName>
            <fullName evidence="1">Ornithine acetyltransferase</fullName>
            <shortName evidence="1">OATase</shortName>
        </alternativeName>
        <alternativeName>
            <fullName evidence="1">Ornithine transacetylase</fullName>
        </alternativeName>
    </domain>
    <domain>
        <recommendedName>
            <fullName evidence="1">Amino-acid acetyltransferase</fullName>
            <ecNumber evidence="1">2.3.1.1</ecNumber>
        </recommendedName>
        <alternativeName>
            <fullName evidence="1">N-acetylglutamate synthase</fullName>
            <shortName evidence="1">AGSase</shortName>
        </alternativeName>
    </domain>
    <component>
        <recommendedName>
            <fullName evidence="1">Arginine biosynthesis bifunctional protein ArgJ alpha chain</fullName>
        </recommendedName>
    </component>
    <component>
        <recommendedName>
            <fullName evidence="1">Arginine biosynthesis bifunctional protein ArgJ beta chain</fullName>
        </recommendedName>
    </component>
</protein>
<feature type="chain" id="PRO_0000002247" description="Arginine biosynthesis bifunctional protein ArgJ alpha chain" evidence="1">
    <location>
        <begin position="1"/>
        <end position="178"/>
    </location>
</feature>
<feature type="chain" id="PRO_0000002248" description="Arginine biosynthesis bifunctional protein ArgJ beta chain" evidence="1">
    <location>
        <begin position="179"/>
        <end position="383"/>
    </location>
</feature>
<feature type="active site" description="Nucleophile" evidence="1">
    <location>
        <position position="179"/>
    </location>
</feature>
<feature type="binding site" evidence="1">
    <location>
        <position position="146"/>
    </location>
    <ligand>
        <name>substrate</name>
    </ligand>
</feature>
<feature type="binding site" evidence="1">
    <location>
        <position position="168"/>
    </location>
    <ligand>
        <name>substrate</name>
    </ligand>
</feature>
<feature type="binding site" evidence="1">
    <location>
        <position position="179"/>
    </location>
    <ligand>
        <name>substrate</name>
    </ligand>
</feature>
<feature type="binding site" evidence="1">
    <location>
        <position position="259"/>
    </location>
    <ligand>
        <name>substrate</name>
    </ligand>
</feature>
<feature type="binding site" evidence="1">
    <location>
        <position position="378"/>
    </location>
    <ligand>
        <name>substrate</name>
    </ligand>
</feature>
<feature type="binding site" evidence="1">
    <location>
        <position position="383"/>
    </location>
    <ligand>
        <name>substrate</name>
    </ligand>
</feature>
<feature type="site" description="Involved in the stabilization of negative charge on the oxyanion by the formation of the oxyanion hole" evidence="1">
    <location>
        <position position="109"/>
    </location>
</feature>
<feature type="site" description="Involved in the stabilization of negative charge on the oxyanion by the formation of the oxyanion hole" evidence="1">
    <location>
        <position position="110"/>
    </location>
</feature>
<feature type="site" description="Cleavage; by autolysis" evidence="1">
    <location>
        <begin position="178"/>
        <end position="179"/>
    </location>
</feature>
<gene>
    <name evidence="1" type="primary">argJ</name>
    <name type="ordered locus">SCO1579</name>
    <name type="ORF">SCI35.01c</name>
    <name type="ORF">SCL24.15c</name>
</gene>
<keyword id="KW-0012">Acyltransferase</keyword>
<keyword id="KW-0028">Amino-acid biosynthesis</keyword>
<keyword id="KW-0055">Arginine biosynthesis</keyword>
<keyword id="KW-0068">Autocatalytic cleavage</keyword>
<keyword id="KW-0963">Cytoplasm</keyword>
<keyword id="KW-0511">Multifunctional enzyme</keyword>
<keyword id="KW-1185">Reference proteome</keyword>
<keyword id="KW-0808">Transferase</keyword>
<sequence length="383" mass="39512">MSVTAAKGFTAAGITAGIKESGSPDLALVVNTGPRRSAAGVFTSNRVKAAPVLWSEQVLKSGEVTAVVLNSGGANACTGPKGFQDTHATAEKAADVLGTGAGEVAVCSTGLIGVLLPMDKLLPGVEAAAGQLSEHGGEKAAIAIKTTDTVHKTSVVTRDGWTVGGMAKGAGMLAPGLATMLVVITTDADLETEALDRALRAATRVTFDRVDSDGCMSTNDTVLLLSSGSSGVTPEYDAFAEAVRTVCDDLGQQLIRDAEGASKDIKVEVVNAATEDEAVQVGRTIARNNLLKCAIHGEDPNWGRVLSAIGTTDAAFEPDRLNVAINGVWVCKNGGVGEDRELVDMRYREVHIVADLAAGDATATIWTNDLTADYVHENSAYSS</sequence>
<accession>Q8CK24</accession>
<name>ARGJ_STRCO</name>
<reference key="1">
    <citation type="journal article" date="2002" name="Nature">
        <title>Complete genome sequence of the model actinomycete Streptomyces coelicolor A3(2).</title>
        <authorList>
            <person name="Bentley S.D."/>
            <person name="Chater K.F."/>
            <person name="Cerdeno-Tarraga A.-M."/>
            <person name="Challis G.L."/>
            <person name="Thomson N.R."/>
            <person name="James K.D."/>
            <person name="Harris D.E."/>
            <person name="Quail M.A."/>
            <person name="Kieser H."/>
            <person name="Harper D."/>
            <person name="Bateman A."/>
            <person name="Brown S."/>
            <person name="Chandra G."/>
            <person name="Chen C.W."/>
            <person name="Collins M."/>
            <person name="Cronin A."/>
            <person name="Fraser A."/>
            <person name="Goble A."/>
            <person name="Hidalgo J."/>
            <person name="Hornsby T."/>
            <person name="Howarth S."/>
            <person name="Huang C.-H."/>
            <person name="Kieser T."/>
            <person name="Larke L."/>
            <person name="Murphy L.D."/>
            <person name="Oliver K."/>
            <person name="O'Neil S."/>
            <person name="Rabbinowitsch E."/>
            <person name="Rajandream M.A."/>
            <person name="Rutherford K.M."/>
            <person name="Rutter S."/>
            <person name="Seeger K."/>
            <person name="Saunders D."/>
            <person name="Sharp S."/>
            <person name="Squares R."/>
            <person name="Squares S."/>
            <person name="Taylor K."/>
            <person name="Warren T."/>
            <person name="Wietzorrek A."/>
            <person name="Woodward J.R."/>
            <person name="Barrell B.G."/>
            <person name="Parkhill J."/>
            <person name="Hopwood D.A."/>
        </authorList>
    </citation>
    <scope>NUCLEOTIDE SEQUENCE [LARGE SCALE GENOMIC DNA]</scope>
    <source>
        <strain>ATCC BAA-471 / A3(2) / M145</strain>
    </source>
</reference>
<reference key="2">
    <citation type="journal article" date="1994" name="Microbiology">
        <title>Cloning and expression in Escherichia coli of a Streptomyces coelicolor A3(2) argCJB gene cluster.</title>
        <authorList>
            <person name="Hindle Z."/>
            <person name="Callis R."/>
            <person name="Dowden S."/>
            <person name="Rudd B.A.M."/>
            <person name="Baumberg S."/>
        </authorList>
    </citation>
    <scope>CHARACTERIZATION</scope>
    <source>
        <strain>A3(2) / NRRL B-16638</strain>
    </source>
</reference>
<proteinExistence type="evidence at protein level"/>